<sequence length="245" mass="25898">MLLIPAIDLKEGRCVRLKQGLMEEATVFSDSPAETALHWFEQGARRLHLVDLNGAFAGVPQNLPAIKDILAAVAKDIPVQLGGGIRDLKTIGQYLDLGLNDVIIGTAAVKNPDFVREACKAFPGRIIVGLDAKDGMAAIDGWATVTGHHVIDLAKRFEDDGVNSIIYTDIGRDGMMSGVNIDATVKLAQAVRIPVIASGGLTGLDDIRALCAAEKRGVAGAITGRAIYEGSIDFAQAQQLADSLD</sequence>
<organism>
    <name type="scientific">Neisseria meningitidis serogroup A / serotype 4A (strain DSM 15465 / Z2491)</name>
    <dbReference type="NCBI Taxonomy" id="122587"/>
    <lineage>
        <taxon>Bacteria</taxon>
        <taxon>Pseudomonadati</taxon>
        <taxon>Pseudomonadota</taxon>
        <taxon>Betaproteobacteria</taxon>
        <taxon>Neisseriales</taxon>
        <taxon>Neisseriaceae</taxon>
        <taxon>Neisseria</taxon>
    </lineage>
</organism>
<gene>
    <name type="primary">hisA</name>
    <name type="ordered locus">NMA0839</name>
</gene>
<evidence type="ECO:0000250" key="1"/>
<evidence type="ECO:0000305" key="2"/>
<dbReference type="EC" id="5.3.1.16"/>
<dbReference type="EMBL" id="AL157959">
    <property type="protein sequence ID" value="CAM08077.1"/>
    <property type="molecule type" value="Genomic_DNA"/>
</dbReference>
<dbReference type="PIR" id="C81929">
    <property type="entry name" value="C81929"/>
</dbReference>
<dbReference type="RefSeq" id="WP_002246851.1">
    <property type="nucleotide sequence ID" value="NC_003116.1"/>
</dbReference>
<dbReference type="SMR" id="Q9JVH4"/>
<dbReference type="EnsemblBacteria" id="CAM08077">
    <property type="protein sequence ID" value="CAM08077"/>
    <property type="gene ID" value="NMA0839"/>
</dbReference>
<dbReference type="KEGG" id="nma:NMA0839"/>
<dbReference type="HOGENOM" id="CLU_048577_1_1_4"/>
<dbReference type="UniPathway" id="UPA00031">
    <property type="reaction ID" value="UER00009"/>
</dbReference>
<dbReference type="Proteomes" id="UP000000626">
    <property type="component" value="Chromosome"/>
</dbReference>
<dbReference type="GO" id="GO:0005737">
    <property type="term" value="C:cytoplasm"/>
    <property type="evidence" value="ECO:0007669"/>
    <property type="project" value="UniProtKB-SubCell"/>
</dbReference>
<dbReference type="GO" id="GO:0003949">
    <property type="term" value="F:1-(5-phosphoribosyl)-5-[(5-phosphoribosylamino)methylideneamino]imidazole-4-carboxamide isomerase activity"/>
    <property type="evidence" value="ECO:0007669"/>
    <property type="project" value="UniProtKB-UniRule"/>
</dbReference>
<dbReference type="GO" id="GO:0000105">
    <property type="term" value="P:L-histidine biosynthetic process"/>
    <property type="evidence" value="ECO:0007669"/>
    <property type="project" value="UniProtKB-UniRule"/>
</dbReference>
<dbReference type="GO" id="GO:0000162">
    <property type="term" value="P:L-tryptophan biosynthetic process"/>
    <property type="evidence" value="ECO:0007669"/>
    <property type="project" value="TreeGrafter"/>
</dbReference>
<dbReference type="CDD" id="cd04732">
    <property type="entry name" value="HisA"/>
    <property type="match status" value="1"/>
</dbReference>
<dbReference type="FunFam" id="3.20.20.70:FF:000009">
    <property type="entry name" value="1-(5-phosphoribosyl)-5-[(5-phosphoribosylamino)methylideneamino] imidazole-4-carboxamide isomerase"/>
    <property type="match status" value="1"/>
</dbReference>
<dbReference type="Gene3D" id="3.20.20.70">
    <property type="entry name" value="Aldolase class I"/>
    <property type="match status" value="1"/>
</dbReference>
<dbReference type="HAMAP" id="MF_01014">
    <property type="entry name" value="HisA"/>
    <property type="match status" value="1"/>
</dbReference>
<dbReference type="InterPro" id="IPR013785">
    <property type="entry name" value="Aldolase_TIM"/>
</dbReference>
<dbReference type="InterPro" id="IPR006062">
    <property type="entry name" value="His_biosynth"/>
</dbReference>
<dbReference type="InterPro" id="IPR006063">
    <property type="entry name" value="HisA_bact_arch"/>
</dbReference>
<dbReference type="InterPro" id="IPR044524">
    <property type="entry name" value="Isoase_HisA-like"/>
</dbReference>
<dbReference type="InterPro" id="IPR023016">
    <property type="entry name" value="Isoase_HisA-like_bact"/>
</dbReference>
<dbReference type="InterPro" id="IPR011060">
    <property type="entry name" value="RibuloseP-bd_barrel"/>
</dbReference>
<dbReference type="NCBIfam" id="TIGR00007">
    <property type="entry name" value="1-(5-phosphoribosyl)-5-[(5-phosphoribosylamino)methylideneamino]imidazole-4-carboxamide isomerase"/>
    <property type="match status" value="1"/>
</dbReference>
<dbReference type="NCBIfam" id="NF010112">
    <property type="entry name" value="PRK13585.1"/>
    <property type="match status" value="1"/>
</dbReference>
<dbReference type="PANTHER" id="PTHR43090">
    <property type="entry name" value="1-(5-PHOSPHORIBOSYL)-5-[(5-PHOSPHORIBOSYLAMINO)METHYLIDENEAMINO] IMIDAZOLE-4-CARBOXAMIDE ISOMERASE"/>
    <property type="match status" value="1"/>
</dbReference>
<dbReference type="PANTHER" id="PTHR43090:SF2">
    <property type="entry name" value="1-(5-PHOSPHORIBOSYL)-5-[(5-PHOSPHORIBOSYLAMINO)METHYLIDENEAMINO] IMIDAZOLE-4-CARBOXAMIDE ISOMERASE"/>
    <property type="match status" value="1"/>
</dbReference>
<dbReference type="Pfam" id="PF00977">
    <property type="entry name" value="His_biosynth"/>
    <property type="match status" value="1"/>
</dbReference>
<dbReference type="SUPFAM" id="SSF51366">
    <property type="entry name" value="Ribulose-phoshate binding barrel"/>
    <property type="match status" value="1"/>
</dbReference>
<keyword id="KW-0028">Amino-acid biosynthesis</keyword>
<keyword id="KW-0963">Cytoplasm</keyword>
<keyword id="KW-0368">Histidine biosynthesis</keyword>
<keyword id="KW-0413">Isomerase</keyword>
<feature type="chain" id="PRO_0000142025" description="1-(5-phosphoribosyl)-5-[(5-phosphoribosylamino)methylideneamino] imidazole-4-carboxamide isomerase">
    <location>
        <begin position="1"/>
        <end position="245"/>
    </location>
</feature>
<feature type="active site" description="Proton acceptor" evidence="1">
    <location>
        <position position="8"/>
    </location>
</feature>
<feature type="active site" description="Proton donor" evidence="1">
    <location>
        <position position="131"/>
    </location>
</feature>
<proteinExistence type="inferred from homology"/>
<name>HIS4_NEIMA</name>
<accession>Q9JVH4</accession>
<accession>A1IQP3</accession>
<reference key="1">
    <citation type="journal article" date="2000" name="Nature">
        <title>Complete DNA sequence of a serogroup A strain of Neisseria meningitidis Z2491.</title>
        <authorList>
            <person name="Parkhill J."/>
            <person name="Achtman M."/>
            <person name="James K.D."/>
            <person name="Bentley S.D."/>
            <person name="Churcher C.M."/>
            <person name="Klee S.R."/>
            <person name="Morelli G."/>
            <person name="Basham D."/>
            <person name="Brown D."/>
            <person name="Chillingworth T."/>
            <person name="Davies R.M."/>
            <person name="Davis P."/>
            <person name="Devlin K."/>
            <person name="Feltwell T."/>
            <person name="Hamlin N."/>
            <person name="Holroyd S."/>
            <person name="Jagels K."/>
            <person name="Leather S."/>
            <person name="Moule S."/>
            <person name="Mungall K.L."/>
            <person name="Quail M.A."/>
            <person name="Rajandream M.A."/>
            <person name="Rutherford K.M."/>
            <person name="Simmonds M."/>
            <person name="Skelton J."/>
            <person name="Whitehead S."/>
            <person name="Spratt B.G."/>
            <person name="Barrell B.G."/>
        </authorList>
    </citation>
    <scope>NUCLEOTIDE SEQUENCE [LARGE SCALE GENOMIC DNA]</scope>
    <source>
        <strain>DSM 15465 / Z2491</strain>
    </source>
</reference>
<protein>
    <recommendedName>
        <fullName>1-(5-phosphoribosyl)-5-[(5-phosphoribosylamino)methylideneamino] imidazole-4-carboxamide isomerase</fullName>
        <ecNumber>5.3.1.16</ecNumber>
    </recommendedName>
    <alternativeName>
        <fullName>Phosphoribosylformimino-5-aminoimidazole carboxamide ribotide isomerase</fullName>
    </alternativeName>
</protein>
<comment type="catalytic activity">
    <reaction>
        <text>1-(5-phospho-beta-D-ribosyl)-5-[(5-phospho-beta-D-ribosylamino)methylideneamino]imidazole-4-carboxamide = 5-[(5-phospho-1-deoxy-D-ribulos-1-ylimino)methylamino]-1-(5-phospho-beta-D-ribosyl)imidazole-4-carboxamide</text>
        <dbReference type="Rhea" id="RHEA:15469"/>
        <dbReference type="ChEBI" id="CHEBI:58435"/>
        <dbReference type="ChEBI" id="CHEBI:58525"/>
        <dbReference type="EC" id="5.3.1.16"/>
    </reaction>
</comment>
<comment type="pathway">
    <text>Amino-acid biosynthesis; L-histidine biosynthesis; L-histidine from 5-phospho-alpha-D-ribose 1-diphosphate: step 4/9.</text>
</comment>
<comment type="subcellular location">
    <subcellularLocation>
        <location evidence="1">Cytoplasm</location>
    </subcellularLocation>
</comment>
<comment type="similarity">
    <text evidence="2">Belongs to the HisA/HisF family.</text>
</comment>